<gene>
    <name evidence="1" type="primary">hisF</name>
    <name type="ordered locus">GTNG_3021</name>
</gene>
<reference key="1">
    <citation type="journal article" date="2007" name="Proc. Natl. Acad. Sci. U.S.A.">
        <title>Genome and proteome of long-chain alkane degrading Geobacillus thermodenitrificans NG80-2 isolated from a deep-subsurface oil reservoir.</title>
        <authorList>
            <person name="Feng L."/>
            <person name="Wang W."/>
            <person name="Cheng J."/>
            <person name="Ren Y."/>
            <person name="Zhao G."/>
            <person name="Gao C."/>
            <person name="Tang Y."/>
            <person name="Liu X."/>
            <person name="Han W."/>
            <person name="Peng X."/>
            <person name="Liu R."/>
            <person name="Wang L."/>
        </authorList>
    </citation>
    <scope>NUCLEOTIDE SEQUENCE [LARGE SCALE GENOMIC DNA]</scope>
    <source>
        <strain>NG80-2</strain>
    </source>
</reference>
<proteinExistence type="inferred from homology"/>
<keyword id="KW-0028">Amino-acid biosynthesis</keyword>
<keyword id="KW-0963">Cytoplasm</keyword>
<keyword id="KW-0368">Histidine biosynthesis</keyword>
<keyword id="KW-0456">Lyase</keyword>
<evidence type="ECO:0000255" key="1">
    <source>
        <dbReference type="HAMAP-Rule" id="MF_01013"/>
    </source>
</evidence>
<organism>
    <name type="scientific">Geobacillus thermodenitrificans (strain NG80-2)</name>
    <dbReference type="NCBI Taxonomy" id="420246"/>
    <lineage>
        <taxon>Bacteria</taxon>
        <taxon>Bacillati</taxon>
        <taxon>Bacillota</taxon>
        <taxon>Bacilli</taxon>
        <taxon>Bacillales</taxon>
        <taxon>Anoxybacillaceae</taxon>
        <taxon>Geobacillus</taxon>
    </lineage>
</organism>
<accession>A4ISR2</accession>
<protein>
    <recommendedName>
        <fullName evidence="1">Imidazole glycerol phosphate synthase subunit HisF</fullName>
        <ecNumber evidence="1">4.3.2.10</ecNumber>
    </recommendedName>
    <alternativeName>
        <fullName evidence="1">IGP synthase cyclase subunit</fullName>
    </alternativeName>
    <alternativeName>
        <fullName evidence="1">IGP synthase subunit HisF</fullName>
    </alternativeName>
    <alternativeName>
        <fullName evidence="1">ImGP synthase subunit HisF</fullName>
        <shortName evidence="1">IGPS subunit HisF</shortName>
    </alternativeName>
</protein>
<comment type="function">
    <text evidence="1">IGPS catalyzes the conversion of PRFAR and glutamine to IGP, AICAR and glutamate. The HisF subunit catalyzes the cyclization activity that produces IGP and AICAR from PRFAR using the ammonia provided by the HisH subunit.</text>
</comment>
<comment type="catalytic activity">
    <reaction evidence="1">
        <text>5-[(5-phospho-1-deoxy-D-ribulos-1-ylimino)methylamino]-1-(5-phospho-beta-D-ribosyl)imidazole-4-carboxamide + L-glutamine = D-erythro-1-(imidazol-4-yl)glycerol 3-phosphate + 5-amino-1-(5-phospho-beta-D-ribosyl)imidazole-4-carboxamide + L-glutamate + H(+)</text>
        <dbReference type="Rhea" id="RHEA:24793"/>
        <dbReference type="ChEBI" id="CHEBI:15378"/>
        <dbReference type="ChEBI" id="CHEBI:29985"/>
        <dbReference type="ChEBI" id="CHEBI:58278"/>
        <dbReference type="ChEBI" id="CHEBI:58359"/>
        <dbReference type="ChEBI" id="CHEBI:58475"/>
        <dbReference type="ChEBI" id="CHEBI:58525"/>
        <dbReference type="EC" id="4.3.2.10"/>
    </reaction>
</comment>
<comment type="pathway">
    <text evidence="1">Amino-acid biosynthesis; L-histidine biosynthesis; L-histidine from 5-phospho-alpha-D-ribose 1-diphosphate: step 5/9.</text>
</comment>
<comment type="subunit">
    <text evidence="1">Heterodimer of HisH and HisF.</text>
</comment>
<comment type="subcellular location">
    <subcellularLocation>
        <location evidence="1">Cytoplasm</location>
    </subcellularLocation>
</comment>
<comment type="similarity">
    <text evidence="1">Belongs to the HisA/HisF family.</text>
</comment>
<sequence>MITKRIIPCLDVKDGRVVKGVQFVQLRDAGDPVELAKAYDEQGADELVFLDISASHEGRKTMVDVVERVAAQLAIPFTVGGGIHSLDDMKRILRAGADKVSLNTAAVLHPSLVTEGADFFGSQCIVVAIDAKYDDTIGSWRVYTHGGRNATEWEVVAWAKEAVRLGAGEILLTSMDADGGKNGFDVELTRRVSEAVSVPVIASGGAGKAEHFLDVFERGKADAALAASIFHYKETSVGQVKAYLRERGVNVR</sequence>
<dbReference type="EC" id="4.3.2.10" evidence="1"/>
<dbReference type="EMBL" id="CP000557">
    <property type="protein sequence ID" value="ABO68366.1"/>
    <property type="molecule type" value="Genomic_DNA"/>
</dbReference>
<dbReference type="RefSeq" id="WP_008880305.1">
    <property type="nucleotide sequence ID" value="NC_009328.1"/>
</dbReference>
<dbReference type="SMR" id="A4ISR2"/>
<dbReference type="GeneID" id="87622830"/>
<dbReference type="KEGG" id="gtn:GTNG_3021"/>
<dbReference type="eggNOG" id="COG0107">
    <property type="taxonomic scope" value="Bacteria"/>
</dbReference>
<dbReference type="HOGENOM" id="CLU_048577_4_0_9"/>
<dbReference type="UniPathway" id="UPA00031">
    <property type="reaction ID" value="UER00010"/>
</dbReference>
<dbReference type="Proteomes" id="UP000001578">
    <property type="component" value="Chromosome"/>
</dbReference>
<dbReference type="GO" id="GO:0005737">
    <property type="term" value="C:cytoplasm"/>
    <property type="evidence" value="ECO:0007669"/>
    <property type="project" value="UniProtKB-SubCell"/>
</dbReference>
<dbReference type="GO" id="GO:0000107">
    <property type="term" value="F:imidazoleglycerol-phosphate synthase activity"/>
    <property type="evidence" value="ECO:0007669"/>
    <property type="project" value="UniProtKB-UniRule"/>
</dbReference>
<dbReference type="GO" id="GO:0016829">
    <property type="term" value="F:lyase activity"/>
    <property type="evidence" value="ECO:0007669"/>
    <property type="project" value="UniProtKB-KW"/>
</dbReference>
<dbReference type="GO" id="GO:0000105">
    <property type="term" value="P:L-histidine biosynthetic process"/>
    <property type="evidence" value="ECO:0007669"/>
    <property type="project" value="UniProtKB-UniRule"/>
</dbReference>
<dbReference type="CDD" id="cd04731">
    <property type="entry name" value="HisF"/>
    <property type="match status" value="1"/>
</dbReference>
<dbReference type="FunFam" id="3.20.20.70:FF:000006">
    <property type="entry name" value="Imidazole glycerol phosphate synthase subunit HisF"/>
    <property type="match status" value="1"/>
</dbReference>
<dbReference type="Gene3D" id="3.20.20.70">
    <property type="entry name" value="Aldolase class I"/>
    <property type="match status" value="1"/>
</dbReference>
<dbReference type="HAMAP" id="MF_01013">
    <property type="entry name" value="HisF"/>
    <property type="match status" value="1"/>
</dbReference>
<dbReference type="InterPro" id="IPR013785">
    <property type="entry name" value="Aldolase_TIM"/>
</dbReference>
<dbReference type="InterPro" id="IPR006062">
    <property type="entry name" value="His_biosynth"/>
</dbReference>
<dbReference type="InterPro" id="IPR004651">
    <property type="entry name" value="HisF"/>
</dbReference>
<dbReference type="InterPro" id="IPR050064">
    <property type="entry name" value="IGPS_HisA/HisF"/>
</dbReference>
<dbReference type="InterPro" id="IPR011060">
    <property type="entry name" value="RibuloseP-bd_barrel"/>
</dbReference>
<dbReference type="NCBIfam" id="TIGR00735">
    <property type="entry name" value="hisF"/>
    <property type="match status" value="1"/>
</dbReference>
<dbReference type="PANTHER" id="PTHR21235:SF2">
    <property type="entry name" value="IMIDAZOLE GLYCEROL PHOSPHATE SYNTHASE HISHF"/>
    <property type="match status" value="1"/>
</dbReference>
<dbReference type="PANTHER" id="PTHR21235">
    <property type="entry name" value="IMIDAZOLE GLYCEROL PHOSPHATE SYNTHASE SUBUNIT HISF/H IGP SYNTHASE SUBUNIT HISF/H"/>
    <property type="match status" value="1"/>
</dbReference>
<dbReference type="Pfam" id="PF00977">
    <property type="entry name" value="His_biosynth"/>
    <property type="match status" value="1"/>
</dbReference>
<dbReference type="SUPFAM" id="SSF51366">
    <property type="entry name" value="Ribulose-phoshate binding barrel"/>
    <property type="match status" value="1"/>
</dbReference>
<feature type="chain" id="PRO_1000063064" description="Imidazole glycerol phosphate synthase subunit HisF">
    <location>
        <begin position="1"/>
        <end position="252"/>
    </location>
</feature>
<feature type="active site" evidence="1">
    <location>
        <position position="11"/>
    </location>
</feature>
<feature type="active site" evidence="1">
    <location>
        <position position="130"/>
    </location>
</feature>
<name>HIS6_GEOTN</name>